<protein>
    <recommendedName>
        <fullName evidence="1">Uridylate kinase</fullName>
        <shortName evidence="1">UK</shortName>
        <ecNumber evidence="1">2.7.4.22</ecNumber>
    </recommendedName>
    <alternativeName>
        <fullName evidence="1">Uridine monophosphate kinase</fullName>
        <shortName evidence="1">UMP kinase</shortName>
        <shortName evidence="1">UMPK</shortName>
    </alternativeName>
</protein>
<dbReference type="EC" id="2.7.4.22" evidence="1"/>
<dbReference type="EMBL" id="CP000143">
    <property type="protein sequence ID" value="ABA78859.1"/>
    <property type="molecule type" value="Genomic_DNA"/>
</dbReference>
<dbReference type="RefSeq" id="WP_011337673.1">
    <property type="nucleotide sequence ID" value="NC_007493.2"/>
</dbReference>
<dbReference type="RefSeq" id="YP_352760.1">
    <property type="nucleotide sequence ID" value="NC_007493.2"/>
</dbReference>
<dbReference type="SMR" id="Q3J2X5"/>
<dbReference type="STRING" id="272943.RSP_2705"/>
<dbReference type="EnsemblBacteria" id="ABA78859">
    <property type="protein sequence ID" value="ABA78859"/>
    <property type="gene ID" value="RSP_2705"/>
</dbReference>
<dbReference type="GeneID" id="3720434"/>
<dbReference type="KEGG" id="rsp:RSP_2705"/>
<dbReference type="PATRIC" id="fig|272943.9.peg.1631"/>
<dbReference type="eggNOG" id="COG0528">
    <property type="taxonomic scope" value="Bacteria"/>
</dbReference>
<dbReference type="OrthoDB" id="9807458at2"/>
<dbReference type="PhylomeDB" id="Q3J2X5"/>
<dbReference type="UniPathway" id="UPA00159">
    <property type="reaction ID" value="UER00275"/>
</dbReference>
<dbReference type="Proteomes" id="UP000002703">
    <property type="component" value="Chromosome 1"/>
</dbReference>
<dbReference type="GO" id="GO:0005737">
    <property type="term" value="C:cytoplasm"/>
    <property type="evidence" value="ECO:0007669"/>
    <property type="project" value="UniProtKB-SubCell"/>
</dbReference>
<dbReference type="GO" id="GO:0005524">
    <property type="term" value="F:ATP binding"/>
    <property type="evidence" value="ECO:0007669"/>
    <property type="project" value="UniProtKB-KW"/>
</dbReference>
<dbReference type="GO" id="GO:0033862">
    <property type="term" value="F:UMP kinase activity"/>
    <property type="evidence" value="ECO:0007669"/>
    <property type="project" value="UniProtKB-EC"/>
</dbReference>
<dbReference type="GO" id="GO:0044210">
    <property type="term" value="P:'de novo' CTP biosynthetic process"/>
    <property type="evidence" value="ECO:0007669"/>
    <property type="project" value="UniProtKB-UniRule"/>
</dbReference>
<dbReference type="GO" id="GO:0006225">
    <property type="term" value="P:UDP biosynthetic process"/>
    <property type="evidence" value="ECO:0007669"/>
    <property type="project" value="TreeGrafter"/>
</dbReference>
<dbReference type="CDD" id="cd04254">
    <property type="entry name" value="AAK_UMPK-PyrH-Ec"/>
    <property type="match status" value="1"/>
</dbReference>
<dbReference type="FunFam" id="3.40.1160.10:FF:000001">
    <property type="entry name" value="Uridylate kinase"/>
    <property type="match status" value="1"/>
</dbReference>
<dbReference type="Gene3D" id="3.40.1160.10">
    <property type="entry name" value="Acetylglutamate kinase-like"/>
    <property type="match status" value="1"/>
</dbReference>
<dbReference type="HAMAP" id="MF_01220_B">
    <property type="entry name" value="PyrH_B"/>
    <property type="match status" value="1"/>
</dbReference>
<dbReference type="InterPro" id="IPR036393">
    <property type="entry name" value="AceGlu_kinase-like_sf"/>
</dbReference>
<dbReference type="InterPro" id="IPR001048">
    <property type="entry name" value="Asp/Glu/Uridylate_kinase"/>
</dbReference>
<dbReference type="InterPro" id="IPR011817">
    <property type="entry name" value="Uridylate_kinase"/>
</dbReference>
<dbReference type="InterPro" id="IPR015963">
    <property type="entry name" value="Uridylate_kinase_bac"/>
</dbReference>
<dbReference type="NCBIfam" id="TIGR02075">
    <property type="entry name" value="pyrH_bact"/>
    <property type="match status" value="1"/>
</dbReference>
<dbReference type="PANTHER" id="PTHR42833">
    <property type="entry name" value="URIDYLATE KINASE"/>
    <property type="match status" value="1"/>
</dbReference>
<dbReference type="PANTHER" id="PTHR42833:SF4">
    <property type="entry name" value="URIDYLATE KINASE PUMPKIN, CHLOROPLASTIC"/>
    <property type="match status" value="1"/>
</dbReference>
<dbReference type="Pfam" id="PF00696">
    <property type="entry name" value="AA_kinase"/>
    <property type="match status" value="1"/>
</dbReference>
<dbReference type="PIRSF" id="PIRSF005650">
    <property type="entry name" value="Uridylate_kin"/>
    <property type="match status" value="1"/>
</dbReference>
<dbReference type="SUPFAM" id="SSF53633">
    <property type="entry name" value="Carbamate kinase-like"/>
    <property type="match status" value="1"/>
</dbReference>
<comment type="function">
    <text evidence="1">Catalyzes the reversible phosphorylation of UMP to UDP.</text>
</comment>
<comment type="catalytic activity">
    <reaction evidence="1">
        <text>UMP + ATP = UDP + ADP</text>
        <dbReference type="Rhea" id="RHEA:24400"/>
        <dbReference type="ChEBI" id="CHEBI:30616"/>
        <dbReference type="ChEBI" id="CHEBI:57865"/>
        <dbReference type="ChEBI" id="CHEBI:58223"/>
        <dbReference type="ChEBI" id="CHEBI:456216"/>
        <dbReference type="EC" id="2.7.4.22"/>
    </reaction>
</comment>
<comment type="activity regulation">
    <text evidence="1">Allosterically activated by GTP. Inhibited by UTP.</text>
</comment>
<comment type="pathway">
    <text evidence="1">Pyrimidine metabolism; CTP biosynthesis via de novo pathway; UDP from UMP (UMPK route): step 1/1.</text>
</comment>
<comment type="subunit">
    <text evidence="1">Homohexamer.</text>
</comment>
<comment type="subcellular location">
    <subcellularLocation>
        <location evidence="1">Cytoplasm</location>
    </subcellularLocation>
</comment>
<comment type="similarity">
    <text evidence="1">Belongs to the UMP kinase family.</text>
</comment>
<reference key="1">
    <citation type="submission" date="2005-09" db="EMBL/GenBank/DDBJ databases">
        <title>Complete sequence of chromosome 1 of Rhodobacter sphaeroides 2.4.1.</title>
        <authorList>
            <person name="Copeland A."/>
            <person name="Lucas S."/>
            <person name="Lapidus A."/>
            <person name="Barry K."/>
            <person name="Detter J.C."/>
            <person name="Glavina T."/>
            <person name="Hammon N."/>
            <person name="Israni S."/>
            <person name="Pitluck S."/>
            <person name="Richardson P."/>
            <person name="Mackenzie C."/>
            <person name="Choudhary M."/>
            <person name="Larimer F."/>
            <person name="Hauser L.J."/>
            <person name="Land M."/>
            <person name="Donohue T.J."/>
            <person name="Kaplan S."/>
        </authorList>
    </citation>
    <scope>NUCLEOTIDE SEQUENCE [LARGE SCALE GENOMIC DNA]</scope>
    <source>
        <strain>ATCC 17023 / DSM 158 / JCM 6121 / CCUG 31486 / LMG 2827 / NBRC 12203 / NCIMB 8253 / ATH 2.4.1.</strain>
    </source>
</reference>
<organism>
    <name type="scientific">Cereibacter sphaeroides (strain ATCC 17023 / DSM 158 / JCM 6121 / CCUG 31486 / LMG 2827 / NBRC 12203 / NCIMB 8253 / ATH 2.4.1.)</name>
    <name type="common">Rhodobacter sphaeroides</name>
    <dbReference type="NCBI Taxonomy" id="272943"/>
    <lineage>
        <taxon>Bacteria</taxon>
        <taxon>Pseudomonadati</taxon>
        <taxon>Pseudomonadota</taxon>
        <taxon>Alphaproteobacteria</taxon>
        <taxon>Rhodobacterales</taxon>
        <taxon>Paracoccaceae</taxon>
        <taxon>Cereibacter</taxon>
    </lineage>
</organism>
<accession>Q3J2X5</accession>
<feature type="chain" id="PRO_0000323933" description="Uridylate kinase">
    <location>
        <begin position="1"/>
        <end position="246"/>
    </location>
</feature>
<feature type="region of interest" description="Involved in allosteric activation by GTP" evidence="1">
    <location>
        <begin position="28"/>
        <end position="33"/>
    </location>
</feature>
<feature type="binding site" evidence="1">
    <location>
        <begin position="20"/>
        <end position="23"/>
    </location>
    <ligand>
        <name>ATP</name>
        <dbReference type="ChEBI" id="CHEBI:30616"/>
    </ligand>
</feature>
<feature type="binding site" evidence="1">
    <location>
        <position position="62"/>
    </location>
    <ligand>
        <name>UMP</name>
        <dbReference type="ChEBI" id="CHEBI:57865"/>
    </ligand>
</feature>
<feature type="binding site" evidence="1">
    <location>
        <position position="63"/>
    </location>
    <ligand>
        <name>ATP</name>
        <dbReference type="ChEBI" id="CHEBI:30616"/>
    </ligand>
</feature>
<feature type="binding site" evidence="1">
    <location>
        <position position="67"/>
    </location>
    <ligand>
        <name>ATP</name>
        <dbReference type="ChEBI" id="CHEBI:30616"/>
    </ligand>
</feature>
<feature type="binding site" evidence="1">
    <location>
        <position position="82"/>
    </location>
    <ligand>
        <name>UMP</name>
        <dbReference type="ChEBI" id="CHEBI:57865"/>
    </ligand>
</feature>
<feature type="binding site" evidence="1">
    <location>
        <begin position="143"/>
        <end position="150"/>
    </location>
    <ligand>
        <name>UMP</name>
        <dbReference type="ChEBI" id="CHEBI:57865"/>
    </ligand>
</feature>
<feature type="binding site" evidence="1">
    <location>
        <position position="170"/>
    </location>
    <ligand>
        <name>ATP</name>
        <dbReference type="ChEBI" id="CHEBI:30616"/>
    </ligand>
</feature>
<feature type="binding site" evidence="1">
    <location>
        <position position="176"/>
    </location>
    <ligand>
        <name>ATP</name>
        <dbReference type="ChEBI" id="CHEBI:30616"/>
    </ligand>
</feature>
<feature type="binding site" evidence="1">
    <location>
        <position position="179"/>
    </location>
    <ligand>
        <name>ATP</name>
        <dbReference type="ChEBI" id="CHEBI:30616"/>
    </ligand>
</feature>
<proteinExistence type="inferred from homology"/>
<name>PYRH_CERS4</name>
<keyword id="KW-0021">Allosteric enzyme</keyword>
<keyword id="KW-0067">ATP-binding</keyword>
<keyword id="KW-0963">Cytoplasm</keyword>
<keyword id="KW-0418">Kinase</keyword>
<keyword id="KW-0547">Nucleotide-binding</keyword>
<keyword id="KW-0665">Pyrimidine biosynthesis</keyword>
<keyword id="KW-1185">Reference proteome</keyword>
<keyword id="KW-0808">Transferase</keyword>
<sequence>MTSEAAPASTAVTYKRVMLKISGEALMGDQGYGLHPPTVQRIAREVQAVHRLGVEICLVIGGGNIFRGLQGSAQGMERTTADYMGMLATVMNALAMQAALESLGIFTRVISAIPMDQVCEPYIRRRAVRHLEKKRVCIFAAGTGNPYFTTDTAATLRANEMACQAIFKGTKVDGVYDKDPRKFADAKRYETVSYDECLQKHLGVMDASAIALARDNDLPIIVFSLDEPGGFCGILRGEGTYTRVQG</sequence>
<evidence type="ECO:0000255" key="1">
    <source>
        <dbReference type="HAMAP-Rule" id="MF_01220"/>
    </source>
</evidence>
<gene>
    <name evidence="1" type="primary">pyrH</name>
    <name type="ordered locus">RHOS4_12910</name>
    <name type="ORF">RSP_2705</name>
</gene>